<name>TMAR_HAEI8</name>
<dbReference type="EMBL" id="CP000057">
    <property type="protein sequence ID" value="AAX88168.1"/>
    <property type="molecule type" value="Genomic_DNA"/>
</dbReference>
<dbReference type="RefSeq" id="WP_005647511.1">
    <property type="nucleotide sequence ID" value="NC_007146.2"/>
</dbReference>
<dbReference type="SMR" id="Q4QLC9"/>
<dbReference type="GeneID" id="93220174"/>
<dbReference type="KEGG" id="hit:NTHI1336"/>
<dbReference type="HOGENOM" id="CLU_153146_0_0_6"/>
<dbReference type="Proteomes" id="UP000002525">
    <property type="component" value="Chromosome"/>
</dbReference>
<dbReference type="GO" id="GO:0005829">
    <property type="term" value="C:cytosol"/>
    <property type="evidence" value="ECO:0007669"/>
    <property type="project" value="TreeGrafter"/>
</dbReference>
<dbReference type="HAMAP" id="MF_00683">
    <property type="entry name" value="Pole_loc_TmaR"/>
    <property type="match status" value="1"/>
</dbReference>
<dbReference type="InterPro" id="IPR007458">
    <property type="entry name" value="DUF496"/>
</dbReference>
<dbReference type="NCBIfam" id="NF003844">
    <property type="entry name" value="PRK05423.1"/>
    <property type="match status" value="1"/>
</dbReference>
<dbReference type="PANTHER" id="PTHR39591">
    <property type="entry name" value="UPF0265 PROTEIN YEEX"/>
    <property type="match status" value="1"/>
</dbReference>
<dbReference type="PANTHER" id="PTHR39591:SF1">
    <property type="entry name" value="UPF0265 PROTEIN YEEX"/>
    <property type="match status" value="1"/>
</dbReference>
<dbReference type="Pfam" id="PF04363">
    <property type="entry name" value="DUF496"/>
    <property type="match status" value="1"/>
</dbReference>
<dbReference type="PIRSF" id="PIRSF028773">
    <property type="entry name" value="UCP028773"/>
    <property type="match status" value="1"/>
</dbReference>
<keyword id="KW-0175">Coiled coil</keyword>
<keyword id="KW-0963">Cytoplasm</keyword>
<sequence length="114" mass="13881">MEIVNKQSFQEVLEYVRMYRLKNRIKRDMEDNNRKIRDNQKRILLLDNLNQYIRDDMTIAEVRGIIESMRDDYESRVDDYTIRNAELSKQRREASTKMKEQKKAHAELLKNAEK</sequence>
<protein>
    <recommendedName>
        <fullName evidence="1">Pole-localizer protein TmaR</fullName>
    </recommendedName>
</protein>
<gene>
    <name evidence="1" type="primary">tmaR</name>
    <name type="ordered locus">NTHI1336</name>
</gene>
<comment type="function">
    <text evidence="1">Pole-localizer protein involved in the regulation of several cellular processes.</text>
</comment>
<comment type="subcellular location">
    <subcellularLocation>
        <location evidence="1">Cytoplasm</location>
    </subcellularLocation>
</comment>
<comment type="similarity">
    <text evidence="1">Belongs to the pole-localizer TmaR family.</text>
</comment>
<proteinExistence type="inferred from homology"/>
<evidence type="ECO:0000255" key="1">
    <source>
        <dbReference type="HAMAP-Rule" id="MF_00683"/>
    </source>
</evidence>
<evidence type="ECO:0000256" key="2">
    <source>
        <dbReference type="SAM" id="MobiDB-lite"/>
    </source>
</evidence>
<reference key="1">
    <citation type="journal article" date="2005" name="J. Bacteriol.">
        <title>Genomic sequence of an otitis media isolate of nontypeable Haemophilus influenzae: comparative study with H. influenzae serotype d, strain KW20.</title>
        <authorList>
            <person name="Harrison A."/>
            <person name="Dyer D.W."/>
            <person name="Gillaspy A."/>
            <person name="Ray W.C."/>
            <person name="Mungur R."/>
            <person name="Carson M.B."/>
            <person name="Zhong H."/>
            <person name="Gipson J."/>
            <person name="Gipson M."/>
            <person name="Johnson L.S."/>
            <person name="Lewis L."/>
            <person name="Bakaletz L.O."/>
            <person name="Munson R.S. Jr."/>
        </authorList>
    </citation>
    <scope>NUCLEOTIDE SEQUENCE [LARGE SCALE GENOMIC DNA]</scope>
    <source>
        <strain>86-028NP</strain>
    </source>
</reference>
<accession>Q4QLC9</accession>
<feature type="chain" id="PRO_1000044930" description="Pole-localizer protein TmaR">
    <location>
        <begin position="1"/>
        <end position="114"/>
    </location>
</feature>
<feature type="region of interest" description="Disordered" evidence="2">
    <location>
        <begin position="89"/>
        <end position="114"/>
    </location>
</feature>
<feature type="coiled-coil region" evidence="1">
    <location>
        <begin position="70"/>
        <end position="111"/>
    </location>
</feature>
<organism>
    <name type="scientific">Haemophilus influenzae (strain 86-028NP)</name>
    <dbReference type="NCBI Taxonomy" id="281310"/>
    <lineage>
        <taxon>Bacteria</taxon>
        <taxon>Pseudomonadati</taxon>
        <taxon>Pseudomonadota</taxon>
        <taxon>Gammaproteobacteria</taxon>
        <taxon>Pasteurellales</taxon>
        <taxon>Pasteurellaceae</taxon>
        <taxon>Haemophilus</taxon>
    </lineage>
</organism>